<accession>Q5WWK4</accession>
<reference key="1">
    <citation type="journal article" date="2004" name="Nat. Genet.">
        <title>Evidence in the Legionella pneumophila genome for exploitation of host cell functions and high genome plasticity.</title>
        <authorList>
            <person name="Cazalet C."/>
            <person name="Rusniok C."/>
            <person name="Brueggemann H."/>
            <person name="Zidane N."/>
            <person name="Magnier A."/>
            <person name="Ma L."/>
            <person name="Tichit M."/>
            <person name="Jarraud S."/>
            <person name="Bouchier C."/>
            <person name="Vandenesch F."/>
            <person name="Kunst F."/>
            <person name="Etienne J."/>
            <person name="Glaser P."/>
            <person name="Buchrieser C."/>
        </authorList>
    </citation>
    <scope>NUCLEOTIDE SEQUENCE [LARGE SCALE GENOMIC DNA]</scope>
    <source>
        <strain>Lens</strain>
    </source>
</reference>
<dbReference type="EC" id="3.6.4.-" evidence="1"/>
<dbReference type="EMBL" id="CR628337">
    <property type="protein sequence ID" value="CAH15689.1"/>
    <property type="molecule type" value="Genomic_DNA"/>
</dbReference>
<dbReference type="RefSeq" id="WP_011215500.1">
    <property type="nucleotide sequence ID" value="NC_006369.1"/>
</dbReference>
<dbReference type="SMR" id="Q5WWK4"/>
<dbReference type="KEGG" id="lpf:lpl1449"/>
<dbReference type="LegioList" id="lpl1449"/>
<dbReference type="HOGENOM" id="CLU_055599_1_0_6"/>
<dbReference type="Proteomes" id="UP000002517">
    <property type="component" value="Chromosome"/>
</dbReference>
<dbReference type="GO" id="GO:0005737">
    <property type="term" value="C:cytoplasm"/>
    <property type="evidence" value="ECO:0007669"/>
    <property type="project" value="UniProtKB-SubCell"/>
</dbReference>
<dbReference type="GO" id="GO:0048476">
    <property type="term" value="C:Holliday junction resolvase complex"/>
    <property type="evidence" value="ECO:0007669"/>
    <property type="project" value="UniProtKB-UniRule"/>
</dbReference>
<dbReference type="GO" id="GO:0005524">
    <property type="term" value="F:ATP binding"/>
    <property type="evidence" value="ECO:0007669"/>
    <property type="project" value="UniProtKB-UniRule"/>
</dbReference>
<dbReference type="GO" id="GO:0016887">
    <property type="term" value="F:ATP hydrolysis activity"/>
    <property type="evidence" value="ECO:0007669"/>
    <property type="project" value="InterPro"/>
</dbReference>
<dbReference type="GO" id="GO:0000400">
    <property type="term" value="F:four-way junction DNA binding"/>
    <property type="evidence" value="ECO:0007669"/>
    <property type="project" value="UniProtKB-UniRule"/>
</dbReference>
<dbReference type="GO" id="GO:0009378">
    <property type="term" value="F:four-way junction helicase activity"/>
    <property type="evidence" value="ECO:0007669"/>
    <property type="project" value="InterPro"/>
</dbReference>
<dbReference type="GO" id="GO:0006310">
    <property type="term" value="P:DNA recombination"/>
    <property type="evidence" value="ECO:0007669"/>
    <property type="project" value="UniProtKB-UniRule"/>
</dbReference>
<dbReference type="GO" id="GO:0006281">
    <property type="term" value="P:DNA repair"/>
    <property type="evidence" value="ECO:0007669"/>
    <property type="project" value="UniProtKB-UniRule"/>
</dbReference>
<dbReference type="CDD" id="cd00009">
    <property type="entry name" value="AAA"/>
    <property type="match status" value="1"/>
</dbReference>
<dbReference type="FunFam" id="1.10.10.10:FF:000086">
    <property type="entry name" value="Holliday junction ATP-dependent DNA helicase RuvB"/>
    <property type="match status" value="1"/>
</dbReference>
<dbReference type="FunFam" id="3.40.50.300:FF:000073">
    <property type="entry name" value="Holliday junction ATP-dependent DNA helicase RuvB"/>
    <property type="match status" value="1"/>
</dbReference>
<dbReference type="Gene3D" id="1.10.8.60">
    <property type="match status" value="1"/>
</dbReference>
<dbReference type="Gene3D" id="3.40.50.300">
    <property type="entry name" value="P-loop containing nucleotide triphosphate hydrolases"/>
    <property type="match status" value="1"/>
</dbReference>
<dbReference type="Gene3D" id="1.10.10.10">
    <property type="entry name" value="Winged helix-like DNA-binding domain superfamily/Winged helix DNA-binding domain"/>
    <property type="match status" value="1"/>
</dbReference>
<dbReference type="HAMAP" id="MF_00016">
    <property type="entry name" value="DNA_HJ_migration_RuvB"/>
    <property type="match status" value="1"/>
</dbReference>
<dbReference type="InterPro" id="IPR003593">
    <property type="entry name" value="AAA+_ATPase"/>
</dbReference>
<dbReference type="InterPro" id="IPR041445">
    <property type="entry name" value="AAA_lid_4"/>
</dbReference>
<dbReference type="InterPro" id="IPR004605">
    <property type="entry name" value="DNA_helicase_Holl-junc_RuvB"/>
</dbReference>
<dbReference type="InterPro" id="IPR027417">
    <property type="entry name" value="P-loop_NTPase"/>
</dbReference>
<dbReference type="InterPro" id="IPR008824">
    <property type="entry name" value="RuvB-like_N"/>
</dbReference>
<dbReference type="InterPro" id="IPR008823">
    <property type="entry name" value="RuvB_C"/>
</dbReference>
<dbReference type="InterPro" id="IPR036388">
    <property type="entry name" value="WH-like_DNA-bd_sf"/>
</dbReference>
<dbReference type="InterPro" id="IPR036390">
    <property type="entry name" value="WH_DNA-bd_sf"/>
</dbReference>
<dbReference type="NCBIfam" id="NF000868">
    <property type="entry name" value="PRK00080.1"/>
    <property type="match status" value="1"/>
</dbReference>
<dbReference type="NCBIfam" id="TIGR00635">
    <property type="entry name" value="ruvB"/>
    <property type="match status" value="1"/>
</dbReference>
<dbReference type="PANTHER" id="PTHR42848">
    <property type="match status" value="1"/>
</dbReference>
<dbReference type="PANTHER" id="PTHR42848:SF1">
    <property type="entry name" value="HOLLIDAY JUNCTION BRANCH MIGRATION COMPLEX SUBUNIT RUVB"/>
    <property type="match status" value="1"/>
</dbReference>
<dbReference type="Pfam" id="PF17864">
    <property type="entry name" value="AAA_lid_4"/>
    <property type="match status" value="1"/>
</dbReference>
<dbReference type="Pfam" id="PF05491">
    <property type="entry name" value="RuvB_C"/>
    <property type="match status" value="1"/>
</dbReference>
<dbReference type="Pfam" id="PF05496">
    <property type="entry name" value="RuvB_N"/>
    <property type="match status" value="1"/>
</dbReference>
<dbReference type="SMART" id="SM00382">
    <property type="entry name" value="AAA"/>
    <property type="match status" value="1"/>
</dbReference>
<dbReference type="SUPFAM" id="SSF52540">
    <property type="entry name" value="P-loop containing nucleoside triphosphate hydrolases"/>
    <property type="match status" value="1"/>
</dbReference>
<dbReference type="SUPFAM" id="SSF46785">
    <property type="entry name" value="Winged helix' DNA-binding domain"/>
    <property type="match status" value="1"/>
</dbReference>
<sequence length="336" mass="37091">MLESDRLISSQSIVSEDAMDRAIRPLSLSEYVGQDSVSSQMQIFINAARKRNDPLDHVLIFGPPGLGKTTLANIIAHEMGVNIRQTSGPVIERAGDIAAILTNLQQNDVLFIDEIHRLSPVIEEILYPAMEDYKLDIMIGEGPAARSIKLELPPFTLIGATTRAGLLTSPLRDRFGIVQRLEYYSVDSLTQIVARSAHLLGVPTKPEGAREVALRSRGTPRIANRLLRRVRDYSEVKGNGIITVDMAQQALEMLEVDQHGFDLMDRKLLLAVIEHFNGGPVGIDSIAAAIGEEKGTIEDVLEPFLIQQGFLMRTPRGRIATSKAYQHFGFSAIEQE</sequence>
<name>RUVB_LEGPL</name>
<proteinExistence type="inferred from homology"/>
<protein>
    <recommendedName>
        <fullName evidence="1">Holliday junction branch migration complex subunit RuvB</fullName>
        <ecNumber evidence="1">3.6.4.-</ecNumber>
    </recommendedName>
</protein>
<evidence type="ECO:0000255" key="1">
    <source>
        <dbReference type="HAMAP-Rule" id="MF_00016"/>
    </source>
</evidence>
<keyword id="KW-0067">ATP-binding</keyword>
<keyword id="KW-0963">Cytoplasm</keyword>
<keyword id="KW-0227">DNA damage</keyword>
<keyword id="KW-0233">DNA recombination</keyword>
<keyword id="KW-0234">DNA repair</keyword>
<keyword id="KW-0238">DNA-binding</keyword>
<keyword id="KW-0378">Hydrolase</keyword>
<keyword id="KW-0547">Nucleotide-binding</keyword>
<organism>
    <name type="scientific">Legionella pneumophila (strain Lens)</name>
    <dbReference type="NCBI Taxonomy" id="297245"/>
    <lineage>
        <taxon>Bacteria</taxon>
        <taxon>Pseudomonadati</taxon>
        <taxon>Pseudomonadota</taxon>
        <taxon>Gammaproteobacteria</taxon>
        <taxon>Legionellales</taxon>
        <taxon>Legionellaceae</taxon>
        <taxon>Legionella</taxon>
    </lineage>
</organism>
<comment type="function">
    <text evidence="1">The RuvA-RuvB-RuvC complex processes Holliday junction (HJ) DNA during genetic recombination and DNA repair, while the RuvA-RuvB complex plays an important role in the rescue of blocked DNA replication forks via replication fork reversal (RFR). RuvA specifically binds to HJ cruciform DNA, conferring on it an open structure. The RuvB hexamer acts as an ATP-dependent pump, pulling dsDNA into and through the RuvAB complex. RuvB forms 2 homohexamers on either side of HJ DNA bound by 1 or 2 RuvA tetramers; 4 subunits per hexamer contact DNA at a time. Coordinated motions by a converter formed by DNA-disengaged RuvB subunits stimulates ATP hydrolysis and nucleotide exchange. Immobilization of the converter enables RuvB to convert the ATP-contained energy into a lever motion, pulling 2 nucleotides of DNA out of the RuvA tetramer per ATP hydrolyzed, thus driving DNA branch migration. The RuvB motors rotate together with the DNA substrate, which together with the progressing nucleotide cycle form the mechanistic basis for DNA recombination by continuous HJ branch migration. Branch migration allows RuvC to scan DNA until it finds its consensus sequence, where it cleaves and resolves cruciform DNA.</text>
</comment>
<comment type="catalytic activity">
    <reaction evidence="1">
        <text>ATP + H2O = ADP + phosphate + H(+)</text>
        <dbReference type="Rhea" id="RHEA:13065"/>
        <dbReference type="ChEBI" id="CHEBI:15377"/>
        <dbReference type="ChEBI" id="CHEBI:15378"/>
        <dbReference type="ChEBI" id="CHEBI:30616"/>
        <dbReference type="ChEBI" id="CHEBI:43474"/>
        <dbReference type="ChEBI" id="CHEBI:456216"/>
    </reaction>
</comment>
<comment type="subunit">
    <text evidence="1">Homohexamer. Forms an RuvA(8)-RuvB(12)-Holliday junction (HJ) complex. HJ DNA is sandwiched between 2 RuvA tetramers; dsDNA enters through RuvA and exits via RuvB. An RuvB hexamer assembles on each DNA strand where it exits the tetramer. Each RuvB hexamer is contacted by two RuvA subunits (via domain III) on 2 adjacent RuvB subunits; this complex drives branch migration. In the full resolvosome a probable DNA-RuvA(4)-RuvB(12)-RuvC(2) complex forms which resolves the HJ.</text>
</comment>
<comment type="subcellular location">
    <subcellularLocation>
        <location evidence="1">Cytoplasm</location>
    </subcellularLocation>
</comment>
<comment type="domain">
    <text evidence="1">Has 3 domains, the large (RuvB-L) and small ATPase (RuvB-S) domains and the C-terminal head (RuvB-H) domain. The head domain binds DNA, while the ATPase domains jointly bind ATP, ADP or are empty depending on the state of the subunit in the translocation cycle. During a single DNA translocation step the structure of each domain remains the same, but their relative positions change.</text>
</comment>
<comment type="similarity">
    <text evidence="1">Belongs to the RuvB family.</text>
</comment>
<gene>
    <name evidence="1" type="primary">ruvB</name>
    <name type="ordered locus">lpl1449</name>
</gene>
<feature type="chain" id="PRO_0000165547" description="Holliday junction branch migration complex subunit RuvB">
    <location>
        <begin position="1"/>
        <end position="336"/>
    </location>
</feature>
<feature type="region of interest" description="Large ATPase domain (RuvB-L)" evidence="1">
    <location>
        <begin position="4"/>
        <end position="184"/>
    </location>
</feature>
<feature type="region of interest" description="Small ATPAse domain (RuvB-S)" evidence="1">
    <location>
        <begin position="185"/>
        <end position="255"/>
    </location>
</feature>
<feature type="region of interest" description="Head domain (RuvB-H)" evidence="1">
    <location>
        <begin position="258"/>
        <end position="336"/>
    </location>
</feature>
<feature type="binding site" evidence="1">
    <location>
        <position position="23"/>
    </location>
    <ligand>
        <name>ATP</name>
        <dbReference type="ChEBI" id="CHEBI:30616"/>
    </ligand>
</feature>
<feature type="binding site" evidence="1">
    <location>
        <position position="24"/>
    </location>
    <ligand>
        <name>ATP</name>
        <dbReference type="ChEBI" id="CHEBI:30616"/>
    </ligand>
</feature>
<feature type="binding site" evidence="1">
    <location>
        <position position="65"/>
    </location>
    <ligand>
        <name>ATP</name>
        <dbReference type="ChEBI" id="CHEBI:30616"/>
    </ligand>
</feature>
<feature type="binding site" evidence="1">
    <location>
        <position position="68"/>
    </location>
    <ligand>
        <name>ATP</name>
        <dbReference type="ChEBI" id="CHEBI:30616"/>
    </ligand>
</feature>
<feature type="binding site" evidence="1">
    <location>
        <position position="69"/>
    </location>
    <ligand>
        <name>ATP</name>
        <dbReference type="ChEBI" id="CHEBI:30616"/>
    </ligand>
</feature>
<feature type="binding site" evidence="1">
    <location>
        <position position="69"/>
    </location>
    <ligand>
        <name>Mg(2+)</name>
        <dbReference type="ChEBI" id="CHEBI:18420"/>
    </ligand>
</feature>
<feature type="binding site" evidence="1">
    <location>
        <position position="70"/>
    </location>
    <ligand>
        <name>ATP</name>
        <dbReference type="ChEBI" id="CHEBI:30616"/>
    </ligand>
</feature>
<feature type="binding site" evidence="1">
    <location>
        <begin position="131"/>
        <end position="133"/>
    </location>
    <ligand>
        <name>ATP</name>
        <dbReference type="ChEBI" id="CHEBI:30616"/>
    </ligand>
</feature>
<feature type="binding site" evidence="1">
    <location>
        <position position="174"/>
    </location>
    <ligand>
        <name>ATP</name>
        <dbReference type="ChEBI" id="CHEBI:30616"/>
    </ligand>
</feature>
<feature type="binding site" evidence="1">
    <location>
        <position position="184"/>
    </location>
    <ligand>
        <name>ATP</name>
        <dbReference type="ChEBI" id="CHEBI:30616"/>
    </ligand>
</feature>
<feature type="binding site" evidence="1">
    <location>
        <position position="221"/>
    </location>
    <ligand>
        <name>ATP</name>
        <dbReference type="ChEBI" id="CHEBI:30616"/>
    </ligand>
</feature>
<feature type="binding site" evidence="1">
    <location>
        <position position="313"/>
    </location>
    <ligand>
        <name>DNA</name>
        <dbReference type="ChEBI" id="CHEBI:16991"/>
    </ligand>
</feature>
<feature type="binding site" evidence="1">
    <location>
        <position position="318"/>
    </location>
    <ligand>
        <name>DNA</name>
        <dbReference type="ChEBI" id="CHEBI:16991"/>
    </ligand>
</feature>